<dbReference type="EC" id="2.7.11.-" evidence="1"/>
<dbReference type="EC" id="2.7.4.-" evidence="1"/>
<dbReference type="EMBL" id="AP008229">
    <property type="protein sequence ID" value="BAE67935.1"/>
    <property type="molecule type" value="Genomic_DNA"/>
</dbReference>
<dbReference type="RefSeq" id="WP_011258100.1">
    <property type="nucleotide sequence ID" value="NC_007705.1"/>
</dbReference>
<dbReference type="SMR" id="Q2P692"/>
<dbReference type="KEGG" id="xom:XOO1180"/>
<dbReference type="HOGENOM" id="CLU_052030_0_2_6"/>
<dbReference type="GO" id="GO:0005524">
    <property type="term" value="F:ATP binding"/>
    <property type="evidence" value="ECO:0007669"/>
    <property type="project" value="UniProtKB-UniRule"/>
</dbReference>
<dbReference type="GO" id="GO:0000287">
    <property type="term" value="F:magnesium ion binding"/>
    <property type="evidence" value="ECO:0007669"/>
    <property type="project" value="UniProtKB-UniRule"/>
</dbReference>
<dbReference type="GO" id="GO:0000155">
    <property type="term" value="F:phosphorelay sensor kinase activity"/>
    <property type="evidence" value="ECO:0007669"/>
    <property type="project" value="InterPro"/>
</dbReference>
<dbReference type="GO" id="GO:0004674">
    <property type="term" value="F:protein serine/threonine kinase activity"/>
    <property type="evidence" value="ECO:0007669"/>
    <property type="project" value="UniProtKB-KW"/>
</dbReference>
<dbReference type="GO" id="GO:0004712">
    <property type="term" value="F:protein serine/threonine/tyrosine kinase activity"/>
    <property type="evidence" value="ECO:0007669"/>
    <property type="project" value="UniProtKB-UniRule"/>
</dbReference>
<dbReference type="GO" id="GO:0006109">
    <property type="term" value="P:regulation of carbohydrate metabolic process"/>
    <property type="evidence" value="ECO:0007669"/>
    <property type="project" value="UniProtKB-UniRule"/>
</dbReference>
<dbReference type="CDD" id="cd01918">
    <property type="entry name" value="HprK_C"/>
    <property type="match status" value="1"/>
</dbReference>
<dbReference type="FunFam" id="3.40.50.300:FF:000174">
    <property type="entry name" value="HPr kinase/phosphorylase"/>
    <property type="match status" value="1"/>
</dbReference>
<dbReference type="Gene3D" id="3.40.1390.20">
    <property type="entry name" value="HprK N-terminal domain-like"/>
    <property type="match status" value="1"/>
</dbReference>
<dbReference type="Gene3D" id="3.40.50.300">
    <property type="entry name" value="P-loop containing nucleotide triphosphate hydrolases"/>
    <property type="match status" value="1"/>
</dbReference>
<dbReference type="HAMAP" id="MF_01249">
    <property type="entry name" value="HPr_kinase"/>
    <property type="match status" value="1"/>
</dbReference>
<dbReference type="InterPro" id="IPR003755">
    <property type="entry name" value="HPr(Ser)_kin/Pase"/>
</dbReference>
<dbReference type="InterPro" id="IPR011104">
    <property type="entry name" value="Hpr_kin/Pase_C"/>
</dbReference>
<dbReference type="InterPro" id="IPR011126">
    <property type="entry name" value="Hpr_kin/Pase_Hpr_N"/>
</dbReference>
<dbReference type="InterPro" id="IPR027417">
    <property type="entry name" value="P-loop_NTPase"/>
</dbReference>
<dbReference type="InterPro" id="IPR028979">
    <property type="entry name" value="Ser_kin/Pase_Hpr-like_N_sf"/>
</dbReference>
<dbReference type="NCBIfam" id="TIGR00679">
    <property type="entry name" value="hpr-ser"/>
    <property type="match status" value="1"/>
</dbReference>
<dbReference type="PANTHER" id="PTHR30305:SF1">
    <property type="entry name" value="HPR KINASE_PHOSPHORYLASE"/>
    <property type="match status" value="1"/>
</dbReference>
<dbReference type="PANTHER" id="PTHR30305">
    <property type="entry name" value="PROTEIN YJDM-RELATED"/>
    <property type="match status" value="1"/>
</dbReference>
<dbReference type="Pfam" id="PF07475">
    <property type="entry name" value="Hpr_kinase_C"/>
    <property type="match status" value="1"/>
</dbReference>
<dbReference type="Pfam" id="PF02603">
    <property type="entry name" value="Hpr_kinase_N"/>
    <property type="match status" value="1"/>
</dbReference>
<dbReference type="SUPFAM" id="SSF75138">
    <property type="entry name" value="HprK N-terminal domain-like"/>
    <property type="match status" value="1"/>
</dbReference>
<dbReference type="SUPFAM" id="SSF53795">
    <property type="entry name" value="PEP carboxykinase-like"/>
    <property type="match status" value="1"/>
</dbReference>
<evidence type="ECO:0000255" key="1">
    <source>
        <dbReference type="HAMAP-Rule" id="MF_01249"/>
    </source>
</evidence>
<protein>
    <recommendedName>
        <fullName evidence="1">HPr kinase/phosphorylase</fullName>
        <shortName evidence="1">HPrK/P</shortName>
        <ecNumber evidence="1">2.7.11.-</ecNumber>
        <ecNumber evidence="1">2.7.4.-</ecNumber>
    </recommendedName>
    <alternativeName>
        <fullName evidence="1">HPr(Ser) kinase/phosphorylase</fullName>
    </alternativeName>
</protein>
<gene>
    <name evidence="1" type="primary">hprK</name>
    <name type="ordered locus">XOO1180</name>
</gene>
<sequence>MNTSITARELFDQQRDKLALRWVAGQKGEHREIQAGSNNARRPSLAGYLNVIYPNKVQILGTEELAWLDSLDARQRWETIEKIIQVQPLALAISKNQSCPEDLGAAADESNTPLWISPKRGHELLNHLSYHLARTLAPRVTLHGVFMEIYSIGVLITGEAGSGKSELALELLSRGHRLVADDAPEFTQIAPDVLDGTCPELLQDLLEVRGLGVLNVRDMFGDTAVKKNKYLRLIVHLTRPMTEPTPSGYERLTGDSGSRHVLDLDVPLITLPVMPGRNLAVLTEAATRLHILRTKGIDPAAMFIARHSNLLERRTP</sequence>
<feature type="chain" id="PRO_1000067184" description="HPr kinase/phosphorylase">
    <location>
        <begin position="1"/>
        <end position="316"/>
    </location>
</feature>
<feature type="region of interest" description="Important for the catalytic mechanism of both phosphorylation and dephosphorylation" evidence="1">
    <location>
        <begin position="206"/>
        <end position="215"/>
    </location>
</feature>
<feature type="region of interest" description="Important for the catalytic mechanism of dephosphorylation" evidence="1">
    <location>
        <begin position="272"/>
        <end position="277"/>
    </location>
</feature>
<feature type="active site" evidence="1">
    <location>
        <position position="143"/>
    </location>
</feature>
<feature type="active site" evidence="1">
    <location>
        <position position="164"/>
    </location>
</feature>
<feature type="active site" description="Proton acceptor; for phosphorylation activity. Proton donor; for dephosphorylation activity" evidence="1">
    <location>
        <position position="182"/>
    </location>
</feature>
<feature type="active site" evidence="1">
    <location>
        <position position="251"/>
    </location>
</feature>
<feature type="binding site" evidence="1">
    <location>
        <begin position="158"/>
        <end position="165"/>
    </location>
    <ligand>
        <name>ATP</name>
        <dbReference type="ChEBI" id="CHEBI:30616"/>
    </ligand>
</feature>
<feature type="binding site" evidence="1">
    <location>
        <position position="165"/>
    </location>
    <ligand>
        <name>Mg(2+)</name>
        <dbReference type="ChEBI" id="CHEBI:18420"/>
    </ligand>
</feature>
<feature type="binding site" evidence="1">
    <location>
        <position position="207"/>
    </location>
    <ligand>
        <name>Mg(2+)</name>
        <dbReference type="ChEBI" id="CHEBI:18420"/>
    </ligand>
</feature>
<organism>
    <name type="scientific">Xanthomonas oryzae pv. oryzae (strain MAFF 311018)</name>
    <dbReference type="NCBI Taxonomy" id="342109"/>
    <lineage>
        <taxon>Bacteria</taxon>
        <taxon>Pseudomonadati</taxon>
        <taxon>Pseudomonadota</taxon>
        <taxon>Gammaproteobacteria</taxon>
        <taxon>Lysobacterales</taxon>
        <taxon>Lysobacteraceae</taxon>
        <taxon>Xanthomonas</taxon>
    </lineage>
</organism>
<proteinExistence type="inferred from homology"/>
<accession>Q2P692</accession>
<reference key="1">
    <citation type="journal article" date="2005" name="Jpn. Agric. Res. Q.">
        <title>Genome sequence of Xanthomonas oryzae pv. oryzae suggests contribution of large numbers of effector genes and insertion sequences to its race diversity.</title>
        <authorList>
            <person name="Ochiai H."/>
            <person name="Inoue Y."/>
            <person name="Takeya M."/>
            <person name="Sasaki A."/>
            <person name="Kaku H."/>
        </authorList>
    </citation>
    <scope>NUCLEOTIDE SEQUENCE [LARGE SCALE GENOMIC DNA]</scope>
    <source>
        <strain>MAFF 311018</strain>
    </source>
</reference>
<comment type="function">
    <text evidence="1">Catalyzes the ATP- as well as the pyrophosphate-dependent phosphorylation of a specific serine residue in HPr, a phosphocarrier protein of the phosphoenolpyruvate-dependent sugar phosphotransferase system (PTS). HprK/P also catalyzes the pyrophosphate-producing, inorganic phosphate-dependent dephosphorylation (phosphorolysis) of seryl-phosphorylated HPr (P-Ser-HPr).</text>
</comment>
<comment type="catalytic activity">
    <reaction evidence="1">
        <text>[HPr protein]-L-serine + ATP = [HPr protein]-O-phospho-L-serine + ADP + H(+)</text>
        <dbReference type="Rhea" id="RHEA:46600"/>
        <dbReference type="Rhea" id="RHEA-COMP:11602"/>
        <dbReference type="Rhea" id="RHEA-COMP:11603"/>
        <dbReference type="ChEBI" id="CHEBI:15378"/>
        <dbReference type="ChEBI" id="CHEBI:29999"/>
        <dbReference type="ChEBI" id="CHEBI:30616"/>
        <dbReference type="ChEBI" id="CHEBI:83421"/>
        <dbReference type="ChEBI" id="CHEBI:456216"/>
    </reaction>
</comment>
<comment type="catalytic activity">
    <reaction evidence="1">
        <text>[HPr protein]-O-phospho-L-serine + phosphate + H(+) = [HPr protein]-L-serine + diphosphate</text>
        <dbReference type="Rhea" id="RHEA:46604"/>
        <dbReference type="Rhea" id="RHEA-COMP:11602"/>
        <dbReference type="Rhea" id="RHEA-COMP:11603"/>
        <dbReference type="ChEBI" id="CHEBI:15378"/>
        <dbReference type="ChEBI" id="CHEBI:29999"/>
        <dbReference type="ChEBI" id="CHEBI:33019"/>
        <dbReference type="ChEBI" id="CHEBI:43474"/>
        <dbReference type="ChEBI" id="CHEBI:83421"/>
    </reaction>
</comment>
<comment type="cofactor">
    <cofactor evidence="1">
        <name>Mg(2+)</name>
        <dbReference type="ChEBI" id="CHEBI:18420"/>
    </cofactor>
</comment>
<comment type="subunit">
    <text evidence="1">Homohexamer.</text>
</comment>
<comment type="domain">
    <text evidence="1">The Walker A ATP-binding motif also binds Pi and PPi.</text>
</comment>
<comment type="miscellaneous">
    <text evidence="1">Both phosphorylation and phosphorolysis are carried out by the same active site and suggest a common mechanism for both reactions.</text>
</comment>
<comment type="similarity">
    <text evidence="1">Belongs to the HPrK/P family.</text>
</comment>
<name>HPRK_XANOM</name>
<keyword id="KW-0067">ATP-binding</keyword>
<keyword id="KW-0418">Kinase</keyword>
<keyword id="KW-0460">Magnesium</keyword>
<keyword id="KW-0479">Metal-binding</keyword>
<keyword id="KW-0511">Multifunctional enzyme</keyword>
<keyword id="KW-0547">Nucleotide-binding</keyword>
<keyword id="KW-0723">Serine/threonine-protein kinase</keyword>
<keyword id="KW-0808">Transferase</keyword>